<sequence length="231" mass="26516">MKVVIVTSVASLLDASIQFQKTACRHHCNYLSMQVVKEIEEFGTINEKKLEFDTWKDVIQNDEIDAIVFYRVKQISISTGVLYESMMRNRTKPISMYFVRDCLAFDGNPPSFRMTSCNINAYNRNKIKDLIILMNMKTCNKKIIGEFIIDNFGSVDALLSIINSNVTWVTSVINNSNGRGINIRVSNNKMLTITSFRRFVNKLKMYKTTKCASQLDNLCTKMNKMGILDKK</sequence>
<gene>
    <name type="primary">OPG061</name>
    <name type="ORF">MPXVgp048</name>
</gene>
<comment type="subcellular location">
    <subcellularLocation>
        <location evidence="1">Host nucleus</location>
        <location evidence="1">Host nucleolus</location>
    </subcellularLocation>
</comment>
<comment type="induction">
    <text evidence="1">Expressed in the early phase of the viral replicative cycle.</text>
</comment>
<comment type="similarity">
    <text evidence="3">Belongs to the orthopoxvirus OPG058 family.</text>
</comment>
<keyword id="KW-0244">Early protein</keyword>
<keyword id="KW-1048">Host nucleus</keyword>
<keyword id="KW-1185">Reference proteome</keyword>
<accession>A0A7H0DN34</accession>
<organismHost>
    <name type="scientific">Cynomys gunnisoni</name>
    <name type="common">Gunnison's prairie dog</name>
    <name type="synonym">Spermophilus gunnisoni</name>
    <dbReference type="NCBI Taxonomy" id="45479"/>
</organismHost>
<organismHost>
    <name type="scientific">Cynomys leucurus</name>
    <name type="common">White-tailed prairie dog</name>
    <dbReference type="NCBI Taxonomy" id="99825"/>
</organismHost>
<organismHost>
    <name type="scientific">Cynomys ludovicianus</name>
    <name type="common">Black-tailed prairie dog</name>
    <dbReference type="NCBI Taxonomy" id="45480"/>
</organismHost>
<organismHost>
    <name type="scientific">Cynomys mexicanus</name>
    <name type="common">Mexican prairie dog</name>
    <dbReference type="NCBI Taxonomy" id="99826"/>
</organismHost>
<organismHost>
    <name type="scientific">Cynomys parvidens</name>
    <name type="common">Utah prairie dog</name>
    <dbReference type="NCBI Taxonomy" id="99827"/>
</organismHost>
<organismHost>
    <name type="scientific">Gliridae</name>
    <name type="common">dormice</name>
    <dbReference type="NCBI Taxonomy" id="30650"/>
</organismHost>
<organismHost>
    <name type="scientific">Heliosciurus ruwenzorii</name>
    <name type="common">Ruwenzori sun squirrel</name>
    <dbReference type="NCBI Taxonomy" id="226685"/>
</organismHost>
<organismHost>
    <name type="scientific">Homo sapiens</name>
    <name type="common">Human</name>
    <dbReference type="NCBI Taxonomy" id="9606"/>
</organismHost>
<organismHost>
    <name type="scientific">Mus musculus</name>
    <name type="common">Mouse</name>
    <dbReference type="NCBI Taxonomy" id="10090"/>
</organismHost>
<reference key="1">
    <citation type="journal article" date="2022" name="J. Infect. Dis.">
        <title>Exportation of Monkeypox virus from the African continent.</title>
        <authorList>
            <person name="Mauldin M.R."/>
            <person name="McCollum A.M."/>
            <person name="Nakazawa Y.J."/>
            <person name="Mandra A."/>
            <person name="Whitehouse E.R."/>
            <person name="Davidson W."/>
            <person name="Zhao H."/>
            <person name="Gao J."/>
            <person name="Li Y."/>
            <person name="Doty J."/>
            <person name="Yinka-Ogunleye A."/>
            <person name="Akinpelu A."/>
            <person name="Aruna O."/>
            <person name="Naidoo D."/>
            <person name="Lewandowski K."/>
            <person name="Afrough B."/>
            <person name="Graham V."/>
            <person name="Aarons E."/>
            <person name="Hewson R."/>
            <person name="Vipond R."/>
            <person name="Dunning J."/>
            <person name="Chand M."/>
            <person name="Brown C."/>
            <person name="Cohen-Gihon I."/>
            <person name="Erez N."/>
            <person name="Shifman O."/>
            <person name="Israeli O."/>
            <person name="Sharon M."/>
            <person name="Schwartz E."/>
            <person name="Beth-Din A."/>
            <person name="Zvi A."/>
            <person name="Mak T.M."/>
            <person name="Ng Y.K."/>
            <person name="Cui L."/>
            <person name="Lin R.T.P."/>
            <person name="Olson V.A."/>
            <person name="Brooks T."/>
            <person name="Paran N."/>
            <person name="Ihekweazu C."/>
            <person name="Reynolds M.G."/>
        </authorList>
    </citation>
    <scope>NUCLEOTIDE SEQUENCE [LARGE SCALE GENOMIC DNA]</scope>
    <source>
        <strain>MPXV-M5312_HM12_Rivers</strain>
    </source>
</reference>
<name>PG061_MONPV</name>
<proteinExistence type="inferred from homology"/>
<evidence type="ECO:0000250" key="1">
    <source>
        <dbReference type="UniProtKB" id="Q80HX3"/>
    </source>
</evidence>
<evidence type="ECO:0000255" key="2"/>
<evidence type="ECO:0000305" key="3"/>
<protein>
    <recommendedName>
        <fullName>Protein OPG061</fullName>
    </recommendedName>
</protein>
<organism>
    <name type="scientific">Monkeypox virus</name>
    <dbReference type="NCBI Taxonomy" id="10244"/>
    <lineage>
        <taxon>Viruses</taxon>
        <taxon>Varidnaviria</taxon>
        <taxon>Bamfordvirae</taxon>
        <taxon>Nucleocytoviricota</taxon>
        <taxon>Pokkesviricetes</taxon>
        <taxon>Chitovirales</taxon>
        <taxon>Poxviridae</taxon>
        <taxon>Chordopoxvirinae</taxon>
        <taxon>Orthopoxvirus</taxon>
    </lineage>
</organism>
<dbReference type="EMBL" id="MT903340">
    <property type="protein sequence ID" value="QNP12917.1"/>
    <property type="molecule type" value="Genomic_DNA"/>
</dbReference>
<dbReference type="RefSeq" id="NP_536475.1">
    <property type="nucleotide sequence ID" value="NC_003310.1"/>
</dbReference>
<dbReference type="RefSeq" id="YP_010377044.1">
    <property type="nucleotide sequence ID" value="NC_063383.1"/>
</dbReference>
<dbReference type="SMR" id="A0A7H0DN34"/>
<dbReference type="GeneID" id="72551457"/>
<dbReference type="GeneID" id="928982"/>
<dbReference type="KEGG" id="vg:928982"/>
<dbReference type="Proteomes" id="UP000516359">
    <property type="component" value="Genome"/>
</dbReference>
<dbReference type="GO" id="GO:0044196">
    <property type="term" value="C:host cell nucleolus"/>
    <property type="evidence" value="ECO:0007669"/>
    <property type="project" value="UniProtKB-SubCell"/>
</dbReference>
<dbReference type="InterPro" id="IPR006798">
    <property type="entry name" value="Poxvirus_F16"/>
</dbReference>
<dbReference type="Pfam" id="PF04708">
    <property type="entry name" value="Pox_F16"/>
    <property type="match status" value="1"/>
</dbReference>
<dbReference type="PIRSF" id="PIRSF015792">
    <property type="entry name" value="VAC_F16L"/>
    <property type="match status" value="1"/>
</dbReference>
<feature type="chain" id="PRO_0000457656" description="Protein OPG061" evidence="2">
    <location>
        <begin position="1"/>
        <end position="231"/>
    </location>
</feature>